<comment type="function">
    <text evidence="1">One of the components of the core complex of photosystem II (PSII). PSII is a light-driven water:plastoquinone oxidoreductase that uses light energy to abstract electrons from H(2)O, generating O(2) and a proton gradient subsequently used for ATP formation. It consists of a core antenna complex that captures photons, and an electron transfer chain that converts photonic excitation into a charge separation.</text>
</comment>
<comment type="subunit">
    <text evidence="1">PSII is composed of 1 copy each of membrane proteins PsbA, PsbB, PsbC, PsbD, PsbE, PsbF, PsbH, PsbI, PsbJ, PsbK, PsbL, PsbM, PsbT, PsbX, PsbY, PsbZ, Psb30/Ycf12, at least 3 peripheral proteins of the oxygen-evolving complex and a large number of cofactors. It forms dimeric complexes.</text>
</comment>
<comment type="subcellular location">
    <subcellularLocation>
        <location evidence="1">Plastid</location>
        <location evidence="1">Chloroplast thylakoid membrane</location>
        <topology evidence="1">Single-pass membrane protein</topology>
    </subcellularLocation>
</comment>
<comment type="similarity">
    <text evidence="1">Belongs to the PsbJ family.</text>
</comment>
<sequence length="40" mass="4145">MADTTGRIPLWIIGTVTGIPVIGLIGIFFYGSYSGLGSSL</sequence>
<organism>
    <name type="scientific">Populus trichocarpa</name>
    <name type="common">Western balsam poplar</name>
    <name type="synonym">Populus balsamifera subsp. trichocarpa</name>
    <dbReference type="NCBI Taxonomy" id="3694"/>
    <lineage>
        <taxon>Eukaryota</taxon>
        <taxon>Viridiplantae</taxon>
        <taxon>Streptophyta</taxon>
        <taxon>Embryophyta</taxon>
        <taxon>Tracheophyta</taxon>
        <taxon>Spermatophyta</taxon>
        <taxon>Magnoliopsida</taxon>
        <taxon>eudicotyledons</taxon>
        <taxon>Gunneridae</taxon>
        <taxon>Pentapetalae</taxon>
        <taxon>rosids</taxon>
        <taxon>fabids</taxon>
        <taxon>Malpighiales</taxon>
        <taxon>Salicaceae</taxon>
        <taxon>Saliceae</taxon>
        <taxon>Populus</taxon>
    </lineage>
</organism>
<gene>
    <name evidence="1" type="primary">psbJ</name>
    <name type="ordered locus">Poptr_cp037</name>
</gene>
<geneLocation type="chloroplast"/>
<keyword id="KW-0150">Chloroplast</keyword>
<keyword id="KW-0472">Membrane</keyword>
<keyword id="KW-0602">Photosynthesis</keyword>
<keyword id="KW-0604">Photosystem II</keyword>
<keyword id="KW-0934">Plastid</keyword>
<keyword id="KW-0674">Reaction center</keyword>
<keyword id="KW-1185">Reference proteome</keyword>
<keyword id="KW-0793">Thylakoid</keyword>
<keyword id="KW-0812">Transmembrane</keyword>
<keyword id="KW-1133">Transmembrane helix</keyword>
<protein>
    <recommendedName>
        <fullName evidence="1">Photosystem II reaction center protein J</fullName>
        <shortName evidence="1">PSII-J</shortName>
    </recommendedName>
</protein>
<evidence type="ECO:0000255" key="1">
    <source>
        <dbReference type="HAMAP-Rule" id="MF_01305"/>
    </source>
</evidence>
<reference key="1">
    <citation type="journal article" date="2006" name="Science">
        <title>The genome of black cottonwood, Populus trichocarpa (Torr. &amp; Gray).</title>
        <authorList>
            <person name="Tuskan G.A."/>
            <person name="Difazio S."/>
            <person name="Jansson S."/>
            <person name="Bohlmann J."/>
            <person name="Grigoriev I."/>
            <person name="Hellsten U."/>
            <person name="Putnam N."/>
            <person name="Ralph S."/>
            <person name="Rombauts S."/>
            <person name="Salamov A."/>
            <person name="Schein J."/>
            <person name="Sterck L."/>
            <person name="Aerts A."/>
            <person name="Bhalerao R.R."/>
            <person name="Bhalerao R.P."/>
            <person name="Blaudez D."/>
            <person name="Boerjan W."/>
            <person name="Brun A."/>
            <person name="Brunner A."/>
            <person name="Busov V."/>
            <person name="Campbell M."/>
            <person name="Carlson J."/>
            <person name="Chalot M."/>
            <person name="Chapman J."/>
            <person name="Chen G.-L."/>
            <person name="Cooper D."/>
            <person name="Coutinho P.M."/>
            <person name="Couturier J."/>
            <person name="Covert S."/>
            <person name="Cronk Q."/>
            <person name="Cunningham R."/>
            <person name="Davis J."/>
            <person name="Degroeve S."/>
            <person name="Dejardin A."/>
            <person name="dePamphilis C.W."/>
            <person name="Detter J."/>
            <person name="Dirks B."/>
            <person name="Dubchak I."/>
            <person name="Duplessis S."/>
            <person name="Ehlting J."/>
            <person name="Ellis B."/>
            <person name="Gendler K."/>
            <person name="Goodstein D."/>
            <person name="Gribskov M."/>
            <person name="Grimwood J."/>
            <person name="Groover A."/>
            <person name="Gunter L."/>
            <person name="Hamberger B."/>
            <person name="Heinze B."/>
            <person name="Helariutta Y."/>
            <person name="Henrissat B."/>
            <person name="Holligan D."/>
            <person name="Holt R."/>
            <person name="Huang W."/>
            <person name="Islam-Faridi N."/>
            <person name="Jones S."/>
            <person name="Jones-Rhoades M."/>
            <person name="Jorgensen R."/>
            <person name="Joshi C."/>
            <person name="Kangasjaervi J."/>
            <person name="Karlsson J."/>
            <person name="Kelleher C."/>
            <person name="Kirkpatrick R."/>
            <person name="Kirst M."/>
            <person name="Kohler A."/>
            <person name="Kalluri U."/>
            <person name="Larimer F."/>
            <person name="Leebens-Mack J."/>
            <person name="Leple J.-C."/>
            <person name="Locascio P."/>
            <person name="Lou Y."/>
            <person name="Lucas S."/>
            <person name="Martin F."/>
            <person name="Montanini B."/>
            <person name="Napoli C."/>
            <person name="Nelson D.R."/>
            <person name="Nelson C."/>
            <person name="Nieminen K."/>
            <person name="Nilsson O."/>
            <person name="Pereda V."/>
            <person name="Peter G."/>
            <person name="Philippe R."/>
            <person name="Pilate G."/>
            <person name="Poliakov A."/>
            <person name="Razumovskaya J."/>
            <person name="Richardson P."/>
            <person name="Rinaldi C."/>
            <person name="Ritland K."/>
            <person name="Rouze P."/>
            <person name="Ryaboy D."/>
            <person name="Schmutz J."/>
            <person name="Schrader J."/>
            <person name="Segerman B."/>
            <person name="Shin H."/>
            <person name="Siddiqui A."/>
            <person name="Sterky F."/>
            <person name="Terry A."/>
            <person name="Tsai C.-J."/>
            <person name="Uberbacher E."/>
            <person name="Unneberg P."/>
            <person name="Vahala J."/>
            <person name="Wall K."/>
            <person name="Wessler S."/>
            <person name="Yang G."/>
            <person name="Yin T."/>
            <person name="Douglas C."/>
            <person name="Marra M."/>
            <person name="Sandberg G."/>
            <person name="Van de Peer Y."/>
            <person name="Rokhsar D.S."/>
        </authorList>
    </citation>
    <scope>NUCLEOTIDE SEQUENCE [LARGE SCALE GENOMIC DNA]</scope>
    <source>
        <strain>cv. Nisqually</strain>
    </source>
</reference>
<accession>A4GYS5</accession>
<proteinExistence type="inferred from homology"/>
<feature type="chain" id="PRO_0000292260" description="Photosystem II reaction center protein J">
    <location>
        <begin position="1"/>
        <end position="40"/>
    </location>
</feature>
<feature type="transmembrane region" description="Helical" evidence="1">
    <location>
        <begin position="8"/>
        <end position="28"/>
    </location>
</feature>
<dbReference type="EMBL" id="EF489041">
    <property type="protein sequence ID" value="ABO36719.1"/>
    <property type="molecule type" value="Genomic_DNA"/>
</dbReference>
<dbReference type="RefSeq" id="YP_001109516.1">
    <property type="nucleotide sequence ID" value="NC_009143.1"/>
</dbReference>
<dbReference type="SMR" id="A4GYS5"/>
<dbReference type="FunCoup" id="A4GYS5">
    <property type="interactions" value="44"/>
</dbReference>
<dbReference type="STRING" id="3694.A4GYS5"/>
<dbReference type="GeneID" id="4929684"/>
<dbReference type="KEGG" id="pop:4929684"/>
<dbReference type="InParanoid" id="A4GYS5"/>
<dbReference type="Proteomes" id="UP000006729">
    <property type="component" value="Chloroplast"/>
</dbReference>
<dbReference type="GO" id="GO:0009535">
    <property type="term" value="C:chloroplast thylakoid membrane"/>
    <property type="evidence" value="ECO:0007669"/>
    <property type="project" value="UniProtKB-SubCell"/>
</dbReference>
<dbReference type="GO" id="GO:0009523">
    <property type="term" value="C:photosystem II"/>
    <property type="evidence" value="ECO:0000318"/>
    <property type="project" value="GO_Central"/>
</dbReference>
<dbReference type="GO" id="GO:0009539">
    <property type="term" value="C:photosystem II reaction center"/>
    <property type="evidence" value="ECO:0007669"/>
    <property type="project" value="InterPro"/>
</dbReference>
<dbReference type="GO" id="GO:0015979">
    <property type="term" value="P:photosynthesis"/>
    <property type="evidence" value="ECO:0007669"/>
    <property type="project" value="UniProtKB-UniRule"/>
</dbReference>
<dbReference type="Gene3D" id="6.10.250.2070">
    <property type="match status" value="1"/>
</dbReference>
<dbReference type="HAMAP" id="MF_01305">
    <property type="entry name" value="PSII_PsbJ"/>
    <property type="match status" value="1"/>
</dbReference>
<dbReference type="InterPro" id="IPR002682">
    <property type="entry name" value="PSII_PsbJ"/>
</dbReference>
<dbReference type="InterPro" id="IPR037267">
    <property type="entry name" value="PSII_PsbJ_sf"/>
</dbReference>
<dbReference type="NCBIfam" id="NF002722">
    <property type="entry name" value="PRK02565.1"/>
    <property type="match status" value="1"/>
</dbReference>
<dbReference type="PANTHER" id="PTHR34812">
    <property type="entry name" value="PHOTOSYSTEM II REACTION CENTER PROTEIN J"/>
    <property type="match status" value="1"/>
</dbReference>
<dbReference type="PANTHER" id="PTHR34812:SF3">
    <property type="entry name" value="PHOTOSYSTEM II REACTION CENTER PROTEIN J"/>
    <property type="match status" value="1"/>
</dbReference>
<dbReference type="Pfam" id="PF01788">
    <property type="entry name" value="PsbJ"/>
    <property type="match status" value="1"/>
</dbReference>
<dbReference type="SUPFAM" id="SSF161021">
    <property type="entry name" value="Photosystem II reaction center protein J, PsbJ"/>
    <property type="match status" value="1"/>
</dbReference>
<name>PSBJ_POPTR</name>